<gene>
    <name evidence="8" type="primary">ATR13</name>
</gene>
<evidence type="ECO:0000255" key="1"/>
<evidence type="ECO:0000269" key="2">
    <source>
    </source>
</evidence>
<evidence type="ECO:0000269" key="3">
    <source>
    </source>
</evidence>
<evidence type="ECO:0000269" key="4">
    <source>
    </source>
</evidence>
<evidence type="ECO:0000269" key="5">
    <source>
    </source>
</evidence>
<evidence type="ECO:0000269" key="6">
    <source>
    </source>
</evidence>
<evidence type="ECO:0000269" key="7">
    <source>
    </source>
</evidence>
<evidence type="ECO:0000303" key="8">
    <source>
    </source>
</evidence>
<evidence type="ECO:0000305" key="9"/>
<evidence type="ECO:0000305" key="10">
    <source>
    </source>
</evidence>
<evidence type="ECO:0000305" key="11">
    <source>
    </source>
</evidence>
<evidence type="ECO:0007744" key="12">
    <source>
        <dbReference type="PDB" id="2LAI"/>
    </source>
</evidence>
<evidence type="ECO:0007829" key="13">
    <source>
        <dbReference type="PDB" id="2LAI"/>
    </source>
</evidence>
<dbReference type="EMBL" id="AY785305">
    <property type="protein sequence ID" value="AAW63767.1"/>
    <property type="molecule type" value="Genomic_DNA"/>
</dbReference>
<dbReference type="EMBL" id="AY785306">
    <property type="protein sequence ID" value="AAW63768.1"/>
    <property type="molecule type" value="Genomic_DNA"/>
</dbReference>
<dbReference type="PDB" id="2LAI">
    <property type="method" value="NMR"/>
    <property type="chains" value="A=54-154"/>
</dbReference>
<dbReference type="PDBsum" id="2LAI"/>
<dbReference type="SMR" id="Q5G7K8"/>
<dbReference type="VEuPathDB" id="FungiDB:HpaG813534"/>
<dbReference type="EvolutionaryTrace" id="Q5G7K8"/>
<dbReference type="PHI-base" id="PHI:2402"/>
<dbReference type="PHI-base" id="PHI:2410"/>
<dbReference type="PHI-base" id="PHI:2423"/>
<dbReference type="PHI-base" id="PHI:4754"/>
<dbReference type="GO" id="GO:0005576">
    <property type="term" value="C:extracellular region"/>
    <property type="evidence" value="ECO:0007669"/>
    <property type="project" value="UniProtKB-SubCell"/>
</dbReference>
<dbReference type="GO" id="GO:0030430">
    <property type="term" value="C:host cell cytoplasm"/>
    <property type="evidence" value="ECO:0007669"/>
    <property type="project" value="UniProtKB-SubCell"/>
</dbReference>
<dbReference type="Gene3D" id="1.25.40.640">
    <property type="entry name" value="Avirulence protein ATR13"/>
    <property type="match status" value="1"/>
</dbReference>
<dbReference type="InterPro" id="IPR031791">
    <property type="entry name" value="ATR13"/>
</dbReference>
<dbReference type="InterPro" id="IPR038525">
    <property type="entry name" value="ATR13_sf"/>
</dbReference>
<dbReference type="Pfam" id="PF16829">
    <property type="entry name" value="ATR13"/>
    <property type="match status" value="1"/>
</dbReference>
<reference key="1">
    <citation type="journal article" date="2004" name="Science">
        <title>Host-parasite coevolutionary conflict between Arabidopsis and downy mildew.</title>
        <authorList>
            <person name="Allen R.L."/>
            <person name="Bittner-Eddy P.D."/>
            <person name="Grenville-Briggs L.J."/>
            <person name="Meitz J.C."/>
            <person name="Rehmany A.P."/>
            <person name="Rose L.E."/>
            <person name="Beynon J.L."/>
        </authorList>
    </citation>
    <scope>NUCLEOTIDE SEQUENCE [GENOMIC DNA]</scope>
    <scope>FUNCTION</scope>
    <source>
        <strain>Emco5</strain>
        <strain>Goco1</strain>
    </source>
</reference>
<reference key="2">
    <citation type="journal article" date="2007" name="Plant Cell">
        <title>The downy mildew effector proteins ATR1 and ATR13 promote disease susceptibility in Arabidopsis thaliana.</title>
        <authorList>
            <person name="Sohn K.H."/>
            <person name="Lei R."/>
            <person name="Nemri A."/>
            <person name="Jones J.D."/>
        </authorList>
    </citation>
    <scope>FUNCTION</scope>
</reference>
<reference key="3">
    <citation type="journal article" date="2008" name="Microbiology">
        <title>Plasmodium falciparum and Hyaloperonospora parasitica effector translocation motifs are functional in Phytophthora infestans.</title>
        <authorList>
            <person name="Grouffaud S."/>
            <person name="van West P."/>
            <person name="Avrova A.O."/>
            <person name="Birch P.R."/>
            <person name="Whisson S.C."/>
        </authorList>
    </citation>
    <scope>DOMAIN</scope>
</reference>
<reference key="4">
    <citation type="journal article" date="2008" name="Proc. Natl. Acad. Sci. U.S.A.">
        <title>Recognition of the Hyaloperonospora parasitica effector ATR13 triggers resistance against oomycete, bacterial, and viral pathogens.</title>
        <authorList>
            <person name="Rentel M.C."/>
            <person name="Leonelli L."/>
            <person name="Dahlbeck D."/>
            <person name="Zhao B."/>
            <person name="Staskawicz B.J."/>
        </authorList>
    </citation>
    <scope>FUNCTION</scope>
    <scope>DOMAIN</scope>
</reference>
<reference key="5">
    <citation type="journal article" date="2009" name="Mol. Plant Pathol.">
        <title>Maintenance of genetic variation in plants and pathogens involves complex networks of gene-for-gene interactions.</title>
        <authorList>
            <person name="Hall S.A."/>
            <person name="Allen R.L."/>
            <person name="Baumber R.E."/>
            <person name="Baxter L.A."/>
            <person name="Fisher K."/>
            <person name="Bittner-Eddy P.D."/>
            <person name="Rose L.E."/>
            <person name="Holub E.B."/>
            <person name="Beynon J.L."/>
        </authorList>
    </citation>
    <scope>FUNCTION</scope>
</reference>
<reference key="6">
    <citation type="journal article" date="2011" name="PLoS ONE">
        <title>Global analysis of Arabidopsis/downy mildew interactions reveals prevalence of incomplete resistance and rapid evolution of pathogen recognition.</title>
        <authorList>
            <person name="Krasileva K.V."/>
            <person name="Zheng C."/>
            <person name="Leonelli L."/>
            <person name="Goritschnig S."/>
            <person name="Dahlbeck D."/>
            <person name="Staskawicz B.J."/>
        </authorList>
    </citation>
    <scope>FUNCTION</scope>
</reference>
<reference evidence="12" key="7">
    <citation type="journal article" date="2011" name="PLoS Pathog.">
        <title>Structural elucidation and functional characterization of the Hyaloperonospora arabidopsidis effector protein ATR13.</title>
        <authorList>
            <person name="Leonelli L."/>
            <person name="Pelton J."/>
            <person name="Schoeffler A."/>
            <person name="Dahlbeck D."/>
            <person name="Berger J."/>
            <person name="Wemmer D.E."/>
            <person name="Staskawicz B."/>
        </authorList>
    </citation>
    <scope>STRUCTURE BY NMR OF 54-154</scope>
    <scope>FUNCTION</scope>
    <scope>MUTAGENESIS OF PHE-73 AND THR-119</scope>
    <scope>SUBCELLULAR LOCATION</scope>
</reference>
<sequence length="154" mass="16884">MRLVHAVLLPGIIVFVSNGNLLHAHALHEDETGVTAGRQLRAAASEVFGLSRASFGLGKAQDPLDKFFSKIIFSGKPIETSYSAKGIHEKIIEAHDLHVSKSKNAPIQYASVMEYLKKTYPGPDIERIVSTLERHDEVGAKDLGAKLRDALDRQ</sequence>
<name>ATR13_HYAAB</name>
<comment type="function">
    <text evidence="2 3 4 5 7">Secreted effector that acts as an elicitor of hypersensitive response (HR) specifically on plants carrying defense protein RPP13. Recognition of ATR13 by RPP13 initiates defense responses that are effective against oomycete, bacterial and viral pathogens (PubMed:15591208, PubMed:18165328, PubMed:18198274, PubMed:22194907). The allele ATR13-Emco5 recognizes RPP13-Nd, the RPP13 defense protein from Arabidopsis thaliana ecotype Niederzenz (PubMed:19523099).</text>
</comment>
<comment type="subcellular location">
    <subcellularLocation>
        <location evidence="6">Secreted</location>
    </subcellularLocation>
    <subcellularLocation>
        <location evidence="6">Host cytoplasm</location>
    </subcellularLocation>
    <text evidence="6">Localizes to the cytoplasmic scaffolding and to discrete punctate spots along these strands.</text>
</comment>
<comment type="domain">
    <text evidence="11">Has the canonical translocation motif RxLR, but lacks the canonical EER motif, which characterizes most oomycete effectors identified so far.</text>
</comment>
<comment type="domain">
    <text evidence="10">The leucine heptad repeat region contains five protein variants with 12 amino acid polymorphisms. Leucine heptad repeats are a feature of coiled coils where the leucines are embedded in an alpha helical region. Three of the different variants were recognized by RPP13-Nd, suggesting that alteration of the amino acid sequence in this region is tolerated.</text>
</comment>
<comment type="domain">
    <text evidence="4 6">All ATR13 variants contain at least one 11-amino-acid direct repeat region. This region is involved in nucleolar localization. A single repeat unit is found in ATR13-Aswa1, ATR13-Emco5, ATR13-Goco1-A and ATR13-Goco1-B (ATR13-Hind2 has one repeat unit followed by an additional 3 amino acids), preventing nucleolar localization, whereas three units are present in ATR13-Bico1, ATR13-Waco5 and ATR13-Wela3, and four units are present in ATR13-Maks9, ATR13-Hiks1, ATR13-Cala2, ATR13-Cand5, ATR13-Hind4, ATR13-Emwa1-A, ATR13-Emwa1-B, ATR13-Emoy2, ATR13-Noks1 and ATR13-Ahnd1. In addition there are 14 polymorphic positions, resulting in a total of seven variant forms within this domain. No association between the number or sequence identity of these repeats and recognition by RPP13-Nd could be detected.</text>
</comment>
<comment type="domain">
    <text evidence="10">The highly variable C-terminus domain and is involved in the specificity for the recognition by RPP13-Nd. Thr-119 and Arg-148 are critical for recognition by A.thaliana RPP13-Nd.</text>
</comment>
<comment type="miscellaneous">
    <text evidence="2 4 6">The ATR13 effector protein is a highly polymorphic member of the RXLR class, yet only a small subset of the polymorphic residues appear to be involved in RPP13Nd-mediated recognition. Polymorphic residues of ATR13 appear as clusters across the surface of the protein. ATR13-Emco5 is recognized by RPP13-Nd because it has the critical residues Phe-73, as well as Thr-119 and Arg-148 within the highly variable C-terminus domain.</text>
</comment>
<comment type="similarity">
    <text evidence="9">Belongs to the RxLR effector family.</text>
</comment>
<organism>
    <name type="scientific">Hyaloperonospora arabidopsidis</name>
    <name type="common">Peronospora arabidopsidis</name>
    <dbReference type="NCBI Taxonomy" id="272952"/>
    <lineage>
        <taxon>Eukaryota</taxon>
        <taxon>Sar</taxon>
        <taxon>Stramenopiles</taxon>
        <taxon>Oomycota</taxon>
        <taxon>Peronosporales</taxon>
        <taxon>Peronosporaceae</taxon>
        <taxon>Hyaloperonospora</taxon>
    </lineage>
</organism>
<proteinExistence type="evidence at protein level"/>
<protein>
    <recommendedName>
        <fullName evidence="8">Avirulence protein ATR13</fullName>
    </recommendedName>
    <alternativeName>
        <fullName evidence="8">Arabidopsis thaliana recognized protein 13</fullName>
    </alternativeName>
</protein>
<keyword id="KW-0002">3D-structure</keyword>
<keyword id="KW-1035">Host cytoplasm</keyword>
<keyword id="KW-0964">Secreted</keyword>
<keyword id="KW-0732">Signal</keyword>
<keyword id="KW-0843">Virulence</keyword>
<feature type="signal peptide" evidence="1">
    <location>
        <begin position="1"/>
        <end position="19"/>
    </location>
</feature>
<feature type="chain" id="PRO_5007705857" description="Avirulence protein ATR13">
    <location>
        <begin position="20"/>
        <end position="154"/>
    </location>
</feature>
<feature type="region of interest" description="Leucine heptad repeat region" evidence="10">
    <location>
        <begin position="50"/>
        <end position="92"/>
    </location>
</feature>
<feature type="region of interest" description="Single repeat region" evidence="10">
    <location>
        <begin position="93"/>
        <end position="103"/>
    </location>
</feature>
<feature type="region of interest" description="Highly variable C-terminus domain" evidence="10">
    <location>
        <begin position="104"/>
        <end position="154"/>
    </location>
</feature>
<feature type="short sequence motif" description="RxLR" evidence="11">
    <location>
        <begin position="38"/>
        <end position="41"/>
    </location>
</feature>
<feature type="mutagenesis site" description="Leads the loss of recognition (LOR) by RPP13-Nd; when associated with I-119." evidence="6">
    <original>F</original>
    <variation>N</variation>
    <location>
        <position position="73"/>
    </location>
</feature>
<feature type="mutagenesis site" description="Leads the loss of recognition (LOR) by RPP13-Nd; when associated with N-73." evidence="6">
    <original>T</original>
    <variation>I</variation>
    <location>
        <position position="119"/>
    </location>
</feature>
<feature type="turn" evidence="13">
    <location>
        <begin position="70"/>
        <end position="74"/>
    </location>
</feature>
<feature type="strand" evidence="13">
    <location>
        <begin position="78"/>
        <end position="80"/>
    </location>
</feature>
<feature type="helix" evidence="13">
    <location>
        <begin position="81"/>
        <end position="83"/>
    </location>
</feature>
<feature type="strand" evidence="13">
    <location>
        <begin position="87"/>
        <end position="90"/>
    </location>
</feature>
<feature type="turn" evidence="13">
    <location>
        <begin position="91"/>
        <end position="93"/>
    </location>
</feature>
<feature type="strand" evidence="13">
    <location>
        <begin position="98"/>
        <end position="100"/>
    </location>
</feature>
<feature type="turn" evidence="13">
    <location>
        <begin position="116"/>
        <end position="118"/>
    </location>
</feature>
<feature type="helix" evidence="13">
    <location>
        <begin position="123"/>
        <end position="135"/>
    </location>
</feature>
<feature type="turn" evidence="13">
    <location>
        <begin position="138"/>
        <end position="140"/>
    </location>
</feature>
<feature type="helix" evidence="13">
    <location>
        <begin position="141"/>
        <end position="147"/>
    </location>
</feature>
<feature type="helix" evidence="13">
    <location>
        <begin position="149"/>
        <end position="152"/>
    </location>
</feature>
<accession>Q5G7K8</accession>